<sequence>MKPDIHPVYRTVVFHDTSANEYVKVGSTIKTKREIELDGVTYPYVTIDVSSKSHPFYTGKQKTFDSESSAARFQKRFGHFIGAKRG</sequence>
<reference key="1">
    <citation type="submission" date="2007-11" db="EMBL/GenBank/DDBJ databases">
        <authorList>
            <consortium name="The Salmonella enterica serovar Arizonae Genome Sequencing Project"/>
            <person name="McClelland M."/>
            <person name="Sanderson E.K."/>
            <person name="Porwollik S."/>
            <person name="Spieth J."/>
            <person name="Clifton W.S."/>
            <person name="Fulton R."/>
            <person name="Chunyan W."/>
            <person name="Wollam A."/>
            <person name="Shah N."/>
            <person name="Pepin K."/>
            <person name="Bhonagiri V."/>
            <person name="Nash W."/>
            <person name="Johnson M."/>
            <person name="Thiruvilangam P."/>
            <person name="Wilson R."/>
        </authorList>
    </citation>
    <scope>NUCLEOTIDE SEQUENCE [LARGE SCALE GENOMIC DNA]</scope>
    <source>
        <strain>ATCC BAA-731 / CDC346-86 / RSK2980</strain>
    </source>
</reference>
<feature type="chain" id="PRO_1000081457" description="Large ribosomal subunit protein bL31B">
    <location>
        <begin position="1"/>
        <end position="86"/>
    </location>
</feature>
<accession>A9MM02</accession>
<organism>
    <name type="scientific">Salmonella arizonae (strain ATCC BAA-731 / CDC346-86 / RSK2980)</name>
    <dbReference type="NCBI Taxonomy" id="41514"/>
    <lineage>
        <taxon>Bacteria</taxon>
        <taxon>Pseudomonadati</taxon>
        <taxon>Pseudomonadota</taxon>
        <taxon>Gammaproteobacteria</taxon>
        <taxon>Enterobacterales</taxon>
        <taxon>Enterobacteriaceae</taxon>
        <taxon>Salmonella</taxon>
    </lineage>
</organism>
<keyword id="KW-1185">Reference proteome</keyword>
<keyword id="KW-0687">Ribonucleoprotein</keyword>
<keyword id="KW-0689">Ribosomal protein</keyword>
<dbReference type="EMBL" id="CP000880">
    <property type="protein sequence ID" value="ABX22324.1"/>
    <property type="molecule type" value="Genomic_DNA"/>
</dbReference>
<dbReference type="SMR" id="A9MM02"/>
<dbReference type="STRING" id="41514.SARI_02464"/>
<dbReference type="KEGG" id="ses:SARI_02464"/>
<dbReference type="HOGENOM" id="CLU_114306_2_1_6"/>
<dbReference type="Proteomes" id="UP000002084">
    <property type="component" value="Chromosome"/>
</dbReference>
<dbReference type="GO" id="GO:1990904">
    <property type="term" value="C:ribonucleoprotein complex"/>
    <property type="evidence" value="ECO:0007669"/>
    <property type="project" value="UniProtKB-KW"/>
</dbReference>
<dbReference type="GO" id="GO:0005840">
    <property type="term" value="C:ribosome"/>
    <property type="evidence" value="ECO:0007669"/>
    <property type="project" value="UniProtKB-KW"/>
</dbReference>
<dbReference type="GO" id="GO:0003735">
    <property type="term" value="F:structural constituent of ribosome"/>
    <property type="evidence" value="ECO:0007669"/>
    <property type="project" value="InterPro"/>
</dbReference>
<dbReference type="GO" id="GO:0006412">
    <property type="term" value="P:translation"/>
    <property type="evidence" value="ECO:0007669"/>
    <property type="project" value="UniProtKB-UniRule"/>
</dbReference>
<dbReference type="Gene3D" id="4.10.830.30">
    <property type="entry name" value="Ribosomal protein L31"/>
    <property type="match status" value="1"/>
</dbReference>
<dbReference type="HAMAP" id="MF_00502">
    <property type="entry name" value="Ribosomal_bL31_2"/>
    <property type="match status" value="1"/>
</dbReference>
<dbReference type="InterPro" id="IPR034704">
    <property type="entry name" value="Ribosomal_bL28/bL31-like_sf"/>
</dbReference>
<dbReference type="InterPro" id="IPR002150">
    <property type="entry name" value="Ribosomal_bL31"/>
</dbReference>
<dbReference type="InterPro" id="IPR027493">
    <property type="entry name" value="Ribosomal_bL31_B"/>
</dbReference>
<dbReference type="InterPro" id="IPR042105">
    <property type="entry name" value="Ribosomal_bL31_sf"/>
</dbReference>
<dbReference type="NCBIfam" id="TIGR00105">
    <property type="entry name" value="L31"/>
    <property type="match status" value="1"/>
</dbReference>
<dbReference type="NCBIfam" id="NF002462">
    <property type="entry name" value="PRK01678.1"/>
    <property type="match status" value="1"/>
</dbReference>
<dbReference type="PANTHER" id="PTHR33280">
    <property type="entry name" value="50S RIBOSOMAL PROTEIN L31, CHLOROPLASTIC"/>
    <property type="match status" value="1"/>
</dbReference>
<dbReference type="PANTHER" id="PTHR33280:SF1">
    <property type="entry name" value="LARGE RIBOSOMAL SUBUNIT PROTEIN BL31C"/>
    <property type="match status" value="1"/>
</dbReference>
<dbReference type="Pfam" id="PF01197">
    <property type="entry name" value="Ribosomal_L31"/>
    <property type="match status" value="1"/>
</dbReference>
<dbReference type="PRINTS" id="PR01249">
    <property type="entry name" value="RIBOSOMALL31"/>
</dbReference>
<dbReference type="SUPFAM" id="SSF143800">
    <property type="entry name" value="L28p-like"/>
    <property type="match status" value="1"/>
</dbReference>
<gene>
    <name evidence="1" type="primary">rpmE2</name>
    <name type="ordered locus">SARI_02464</name>
</gene>
<name>RL31B_SALAR</name>
<evidence type="ECO:0000255" key="1">
    <source>
        <dbReference type="HAMAP-Rule" id="MF_00502"/>
    </source>
</evidence>
<evidence type="ECO:0000305" key="2"/>
<proteinExistence type="inferred from homology"/>
<comment type="subunit">
    <text evidence="1">Part of the 50S ribosomal subunit.</text>
</comment>
<comment type="similarity">
    <text evidence="1">Belongs to the bacterial ribosomal protein bL31 family. Type B subfamily.</text>
</comment>
<protein>
    <recommendedName>
        <fullName evidence="1">Large ribosomal subunit protein bL31B</fullName>
    </recommendedName>
    <alternativeName>
        <fullName evidence="2">50S ribosomal protein L31 type B</fullName>
    </alternativeName>
</protein>